<dbReference type="EC" id="2.4.99.17" evidence="1"/>
<dbReference type="EMBL" id="CP001139">
    <property type="protein sequence ID" value="ACH66868.1"/>
    <property type="molecule type" value="Genomic_DNA"/>
</dbReference>
<dbReference type="RefSeq" id="WP_012534037.1">
    <property type="nucleotide sequence ID" value="NC_011184.1"/>
</dbReference>
<dbReference type="SMR" id="B5F9Y4"/>
<dbReference type="KEGG" id="vfm:VFMJ11_2104"/>
<dbReference type="HOGENOM" id="CLU_039110_1_0_6"/>
<dbReference type="UniPathway" id="UPA00392"/>
<dbReference type="Proteomes" id="UP000001857">
    <property type="component" value="Chromosome I"/>
</dbReference>
<dbReference type="GO" id="GO:0005737">
    <property type="term" value="C:cytoplasm"/>
    <property type="evidence" value="ECO:0007669"/>
    <property type="project" value="UniProtKB-SubCell"/>
</dbReference>
<dbReference type="GO" id="GO:0051075">
    <property type="term" value="F:S-adenosylmethionine:tRNA ribosyltransferase-isomerase activity"/>
    <property type="evidence" value="ECO:0007669"/>
    <property type="project" value="UniProtKB-EC"/>
</dbReference>
<dbReference type="GO" id="GO:0008616">
    <property type="term" value="P:queuosine biosynthetic process"/>
    <property type="evidence" value="ECO:0007669"/>
    <property type="project" value="UniProtKB-UniRule"/>
</dbReference>
<dbReference type="GO" id="GO:0002099">
    <property type="term" value="P:tRNA wobble guanine modification"/>
    <property type="evidence" value="ECO:0007669"/>
    <property type="project" value="TreeGrafter"/>
</dbReference>
<dbReference type="FunFam" id="2.40.10.240:FF:000001">
    <property type="entry name" value="S-adenosylmethionine:tRNA ribosyltransferase-isomerase"/>
    <property type="match status" value="1"/>
</dbReference>
<dbReference type="FunFam" id="3.40.1780.10:FF:000001">
    <property type="entry name" value="S-adenosylmethionine:tRNA ribosyltransferase-isomerase"/>
    <property type="match status" value="1"/>
</dbReference>
<dbReference type="Gene3D" id="2.40.10.240">
    <property type="entry name" value="QueA-like"/>
    <property type="match status" value="1"/>
</dbReference>
<dbReference type="Gene3D" id="3.40.1780.10">
    <property type="entry name" value="QueA-like"/>
    <property type="match status" value="1"/>
</dbReference>
<dbReference type="HAMAP" id="MF_00113">
    <property type="entry name" value="QueA"/>
    <property type="match status" value="1"/>
</dbReference>
<dbReference type="InterPro" id="IPR003699">
    <property type="entry name" value="QueA"/>
</dbReference>
<dbReference type="InterPro" id="IPR042118">
    <property type="entry name" value="QueA_dom1"/>
</dbReference>
<dbReference type="InterPro" id="IPR042119">
    <property type="entry name" value="QueA_dom2"/>
</dbReference>
<dbReference type="InterPro" id="IPR036100">
    <property type="entry name" value="QueA_sf"/>
</dbReference>
<dbReference type="NCBIfam" id="NF001140">
    <property type="entry name" value="PRK00147.1"/>
    <property type="match status" value="1"/>
</dbReference>
<dbReference type="NCBIfam" id="TIGR00113">
    <property type="entry name" value="queA"/>
    <property type="match status" value="1"/>
</dbReference>
<dbReference type="PANTHER" id="PTHR30307">
    <property type="entry name" value="S-ADENOSYLMETHIONINE:TRNA RIBOSYLTRANSFERASE-ISOMERASE"/>
    <property type="match status" value="1"/>
</dbReference>
<dbReference type="PANTHER" id="PTHR30307:SF0">
    <property type="entry name" value="S-ADENOSYLMETHIONINE:TRNA RIBOSYLTRANSFERASE-ISOMERASE"/>
    <property type="match status" value="1"/>
</dbReference>
<dbReference type="Pfam" id="PF02547">
    <property type="entry name" value="Queuosine_synth"/>
    <property type="match status" value="1"/>
</dbReference>
<dbReference type="SUPFAM" id="SSF111337">
    <property type="entry name" value="QueA-like"/>
    <property type="match status" value="1"/>
</dbReference>
<gene>
    <name evidence="1" type="primary">queA</name>
    <name type="ordered locus">VFMJ11_2104</name>
</gene>
<accession>B5F9Y4</accession>
<protein>
    <recommendedName>
        <fullName evidence="1">S-adenosylmethionine:tRNA ribosyltransferase-isomerase</fullName>
        <ecNumber evidence="1">2.4.99.17</ecNumber>
    </recommendedName>
    <alternativeName>
        <fullName evidence="1">Queuosine biosynthesis protein QueA</fullName>
    </alternativeName>
</protein>
<sequence length="350" mass="39128">MQVSDFHFELPDELIARYPQPERTASRLLQLNGNSGELNDGQFTDILDLVQAGDLLVFNNTRVIPARMFGMKASGGKLEVLVERVLDEHSVLAHVRCSKSPKPGTMLLLGENQEHEAEMVARHDTLFEIRFTSDKKVLDILDEIGHMPLPPYIDRPDEDADKERYQTVYNKKPGAVAAPTAGLHFDTEILEKMKAKGVEFAYVTLHVGAGTFQPVRVDNILEHHMHSEYAEVSQEVIDAINATKARGGRVVSVGTTSVRSLESAAQHALKQGTELAPFFDDTEIFIYPGYEFQVVDALVTNFHLPESTLIMLVSAFAGYDNTMKAYEQAVNNKYRFFSYGDAMFITKKTA</sequence>
<organism>
    <name type="scientific">Aliivibrio fischeri (strain MJ11)</name>
    <name type="common">Vibrio fischeri</name>
    <dbReference type="NCBI Taxonomy" id="388396"/>
    <lineage>
        <taxon>Bacteria</taxon>
        <taxon>Pseudomonadati</taxon>
        <taxon>Pseudomonadota</taxon>
        <taxon>Gammaproteobacteria</taxon>
        <taxon>Vibrionales</taxon>
        <taxon>Vibrionaceae</taxon>
        <taxon>Aliivibrio</taxon>
    </lineage>
</organism>
<keyword id="KW-0963">Cytoplasm</keyword>
<keyword id="KW-0671">Queuosine biosynthesis</keyword>
<keyword id="KW-0949">S-adenosyl-L-methionine</keyword>
<keyword id="KW-0808">Transferase</keyword>
<reference key="1">
    <citation type="submission" date="2008-08" db="EMBL/GenBank/DDBJ databases">
        <title>Complete sequence of Vibrio fischeri strain MJ11.</title>
        <authorList>
            <person name="Mandel M.J."/>
            <person name="Stabb E.V."/>
            <person name="Ruby E.G."/>
            <person name="Ferriera S."/>
            <person name="Johnson J."/>
            <person name="Kravitz S."/>
            <person name="Beeson K."/>
            <person name="Sutton G."/>
            <person name="Rogers Y.-H."/>
            <person name="Friedman R."/>
            <person name="Frazier M."/>
            <person name="Venter J.C."/>
        </authorList>
    </citation>
    <scope>NUCLEOTIDE SEQUENCE [LARGE SCALE GENOMIC DNA]</scope>
    <source>
        <strain>MJ11</strain>
    </source>
</reference>
<comment type="function">
    <text evidence="1">Transfers and isomerizes the ribose moiety from AdoMet to the 7-aminomethyl group of 7-deazaguanine (preQ1-tRNA) to give epoxyqueuosine (oQ-tRNA).</text>
</comment>
<comment type="catalytic activity">
    <reaction evidence="1">
        <text>7-aminomethyl-7-carbaguanosine(34) in tRNA + S-adenosyl-L-methionine = epoxyqueuosine(34) in tRNA + adenine + L-methionine + 2 H(+)</text>
        <dbReference type="Rhea" id="RHEA:32155"/>
        <dbReference type="Rhea" id="RHEA-COMP:10342"/>
        <dbReference type="Rhea" id="RHEA-COMP:18582"/>
        <dbReference type="ChEBI" id="CHEBI:15378"/>
        <dbReference type="ChEBI" id="CHEBI:16708"/>
        <dbReference type="ChEBI" id="CHEBI:57844"/>
        <dbReference type="ChEBI" id="CHEBI:59789"/>
        <dbReference type="ChEBI" id="CHEBI:82833"/>
        <dbReference type="ChEBI" id="CHEBI:194443"/>
        <dbReference type="EC" id="2.4.99.17"/>
    </reaction>
</comment>
<comment type="pathway">
    <text evidence="1">tRNA modification; tRNA-queuosine biosynthesis.</text>
</comment>
<comment type="subunit">
    <text evidence="1">Monomer.</text>
</comment>
<comment type="subcellular location">
    <subcellularLocation>
        <location evidence="1">Cytoplasm</location>
    </subcellularLocation>
</comment>
<comment type="similarity">
    <text evidence="1">Belongs to the QueA family.</text>
</comment>
<evidence type="ECO:0000255" key="1">
    <source>
        <dbReference type="HAMAP-Rule" id="MF_00113"/>
    </source>
</evidence>
<feature type="chain" id="PRO_1000094828" description="S-adenosylmethionine:tRNA ribosyltransferase-isomerase">
    <location>
        <begin position="1"/>
        <end position="350"/>
    </location>
</feature>
<proteinExistence type="inferred from homology"/>
<name>QUEA_ALIFM</name>